<comment type="subunit">
    <text evidence="1">Component of the small ribosomal subunit. Mature ribosomes consist of a small (40S) and a large (60S) subunit. The 40S subunit contains about 33 different proteins and 1 molecule of RNA (18S). The 60S subunit contains about 49 different proteins and 3 molecules of RNA (25S, 5.8S and 5S).</text>
</comment>
<comment type="subcellular location">
    <subcellularLocation>
        <location evidence="1">Cytoplasm</location>
    </subcellularLocation>
</comment>
<comment type="similarity">
    <text evidence="1">Belongs to the eukaryotic ribosomal protein eS1 family.</text>
</comment>
<sequence>MTQGKNPGLKAGGGKKGAKKRTIDPLSRKEWYDFRAPIPFSSKSFGKTLVTKSSGNRIASEEIKGRVVESTLADLKDNSNDKAWRKVKLVIDEVDGRNAKTSFYGLDITRDRLCSMIRKWQTLIEARVDCKTNDGYIIRVFTLAFTKKTSAGKQSSTSTCYAKSSQVRAIRRKINTFITNEAAKLGIAEFSKNLIGEDYTKKIEKETKNIFPLQNITIRKVKVLKRPKLDATKIAELYSHEKKGEKATGRDGAPEEQAAQNLLAQ</sequence>
<dbReference type="EMBL" id="GG662712">
    <property type="protein sequence ID" value="EAR94608.2"/>
    <property type="molecule type" value="Genomic_DNA"/>
</dbReference>
<dbReference type="RefSeq" id="XP_001014743.2">
    <property type="nucleotide sequence ID" value="XM_001014743.3"/>
</dbReference>
<dbReference type="PDB" id="4V5O">
    <property type="method" value="X-ray"/>
    <property type="resolution" value="3.93 A"/>
    <property type="chains" value="A4/B4=1-265"/>
</dbReference>
<dbReference type="PDB" id="5JPQ">
    <property type="method" value="EM"/>
    <property type="resolution" value="7.30 A"/>
    <property type="chains" value="o=1-265"/>
</dbReference>
<dbReference type="PDBsum" id="4V5O"/>
<dbReference type="PDBsum" id="5JPQ"/>
<dbReference type="SMR" id="Q23DE3"/>
<dbReference type="FunCoup" id="Q23DE3">
    <property type="interactions" value="395"/>
</dbReference>
<dbReference type="IntAct" id="Q23DE3">
    <property type="interactions" value="1"/>
</dbReference>
<dbReference type="STRING" id="312017.Q23DE3"/>
<dbReference type="EnsemblProtists" id="EAR94608">
    <property type="protein sequence ID" value="EAR94608"/>
    <property type="gene ID" value="TTHERM_00047480"/>
</dbReference>
<dbReference type="GeneID" id="7833425"/>
<dbReference type="KEGG" id="tet:TTHERM_00047480"/>
<dbReference type="eggNOG" id="KOG1628">
    <property type="taxonomic scope" value="Eukaryota"/>
</dbReference>
<dbReference type="HOGENOM" id="CLU_062507_0_0_1"/>
<dbReference type="InParanoid" id="Q23DE3"/>
<dbReference type="OMA" id="TRFKGHE"/>
<dbReference type="OrthoDB" id="9834376at2759"/>
<dbReference type="Proteomes" id="UP000009168">
    <property type="component" value="Unassembled WGS sequence"/>
</dbReference>
<dbReference type="GO" id="GO:0022627">
    <property type="term" value="C:cytosolic small ribosomal subunit"/>
    <property type="evidence" value="ECO:0007669"/>
    <property type="project" value="UniProtKB-UniRule"/>
</dbReference>
<dbReference type="GO" id="GO:0003735">
    <property type="term" value="F:structural constituent of ribosome"/>
    <property type="evidence" value="ECO:0007669"/>
    <property type="project" value="UniProtKB-UniRule"/>
</dbReference>
<dbReference type="GO" id="GO:0006412">
    <property type="term" value="P:translation"/>
    <property type="evidence" value="ECO:0007669"/>
    <property type="project" value="UniProtKB-UniRule"/>
</dbReference>
<dbReference type="HAMAP" id="MF_03122">
    <property type="entry name" value="Ribosomal_eS1_euk"/>
    <property type="match status" value="1"/>
</dbReference>
<dbReference type="InterPro" id="IPR001593">
    <property type="entry name" value="Ribosomal_eS1"/>
</dbReference>
<dbReference type="InterPro" id="IPR018281">
    <property type="entry name" value="Ribosomal_eS1_CS"/>
</dbReference>
<dbReference type="InterPro" id="IPR027500">
    <property type="entry name" value="Ribosomal_eS1_euk"/>
</dbReference>
<dbReference type="PANTHER" id="PTHR11830">
    <property type="entry name" value="40S RIBOSOMAL PROTEIN S3A"/>
    <property type="match status" value="1"/>
</dbReference>
<dbReference type="Pfam" id="PF01015">
    <property type="entry name" value="Ribosomal_S3Ae"/>
    <property type="match status" value="1"/>
</dbReference>
<dbReference type="SMART" id="SM01397">
    <property type="entry name" value="Ribosomal_S3Ae"/>
    <property type="match status" value="1"/>
</dbReference>
<dbReference type="PROSITE" id="PS01191">
    <property type="entry name" value="RIBOSOMAL_S3AE"/>
    <property type="match status" value="1"/>
</dbReference>
<keyword id="KW-0002">3D-structure</keyword>
<keyword id="KW-0963">Cytoplasm</keyword>
<keyword id="KW-1185">Reference proteome</keyword>
<keyword id="KW-0687">Ribonucleoprotein</keyword>
<keyword id="KW-0689">Ribosomal protein</keyword>
<feature type="initiator methionine" description="Removed" evidence="1">
    <location>
        <position position="1"/>
    </location>
</feature>
<feature type="chain" id="PRO_0000389340" description="Small ribosomal subunit protein eS1">
    <location>
        <begin position="2"/>
        <end position="265"/>
    </location>
</feature>
<feature type="region of interest" description="Disordered" evidence="2">
    <location>
        <begin position="1"/>
        <end position="24"/>
    </location>
</feature>
<feature type="region of interest" description="Disordered" evidence="2">
    <location>
        <begin position="240"/>
        <end position="265"/>
    </location>
</feature>
<feature type="compositionally biased region" description="Basic and acidic residues" evidence="2">
    <location>
        <begin position="240"/>
        <end position="253"/>
    </location>
</feature>
<evidence type="ECO:0000255" key="1">
    <source>
        <dbReference type="HAMAP-Rule" id="MF_03122"/>
    </source>
</evidence>
<evidence type="ECO:0000256" key="2">
    <source>
        <dbReference type="SAM" id="MobiDB-lite"/>
    </source>
</evidence>
<evidence type="ECO:0000305" key="3"/>
<name>RS3A_TETTS</name>
<gene>
    <name type="ORF">TTHERM_00047480</name>
</gene>
<organism>
    <name type="scientific">Tetrahymena thermophila (strain SB210)</name>
    <dbReference type="NCBI Taxonomy" id="312017"/>
    <lineage>
        <taxon>Eukaryota</taxon>
        <taxon>Sar</taxon>
        <taxon>Alveolata</taxon>
        <taxon>Ciliophora</taxon>
        <taxon>Intramacronucleata</taxon>
        <taxon>Oligohymenophorea</taxon>
        <taxon>Hymenostomatida</taxon>
        <taxon>Tetrahymenina</taxon>
        <taxon>Tetrahymenidae</taxon>
        <taxon>Tetrahymena</taxon>
    </lineage>
</organism>
<accession>Q23DE3</accession>
<proteinExistence type="evidence at protein level"/>
<protein>
    <recommendedName>
        <fullName evidence="1">Small ribosomal subunit protein eS1</fullName>
    </recommendedName>
    <alternativeName>
        <fullName evidence="3">40S ribosomal protein S3a</fullName>
    </alternativeName>
</protein>
<reference key="1">
    <citation type="journal article" date="2006" name="PLoS Biol.">
        <title>Macronuclear genome sequence of the ciliate Tetrahymena thermophila, a model eukaryote.</title>
        <authorList>
            <person name="Eisen J.A."/>
            <person name="Coyne R.S."/>
            <person name="Wu M."/>
            <person name="Wu D."/>
            <person name="Thiagarajan M."/>
            <person name="Wortman J.R."/>
            <person name="Badger J.H."/>
            <person name="Ren Q."/>
            <person name="Amedeo P."/>
            <person name="Jones K.M."/>
            <person name="Tallon L.J."/>
            <person name="Delcher A.L."/>
            <person name="Salzberg S.L."/>
            <person name="Silva J.C."/>
            <person name="Haas B.J."/>
            <person name="Majoros W.H."/>
            <person name="Farzad M."/>
            <person name="Carlton J.M."/>
            <person name="Smith R.K. Jr."/>
            <person name="Garg J."/>
            <person name="Pearlman R.E."/>
            <person name="Karrer K.M."/>
            <person name="Sun L."/>
            <person name="Manning G."/>
            <person name="Elde N.C."/>
            <person name="Turkewitz A.P."/>
            <person name="Asai D.J."/>
            <person name="Wilkes D.E."/>
            <person name="Wang Y."/>
            <person name="Cai H."/>
            <person name="Collins K."/>
            <person name="Stewart B.A."/>
            <person name="Lee S.R."/>
            <person name="Wilamowska K."/>
            <person name="Weinberg Z."/>
            <person name="Ruzzo W.L."/>
            <person name="Wloga D."/>
            <person name="Gaertig J."/>
            <person name="Frankel J."/>
            <person name="Tsao C.-C."/>
            <person name="Gorovsky M.A."/>
            <person name="Keeling P.J."/>
            <person name="Waller R.F."/>
            <person name="Patron N.J."/>
            <person name="Cherry J.M."/>
            <person name="Stover N.A."/>
            <person name="Krieger C.J."/>
            <person name="del Toro C."/>
            <person name="Ryder H.F."/>
            <person name="Williamson S.C."/>
            <person name="Barbeau R.A."/>
            <person name="Hamilton E.P."/>
            <person name="Orias E."/>
        </authorList>
    </citation>
    <scope>NUCLEOTIDE SEQUENCE [LARGE SCALE GENOMIC DNA]</scope>
    <source>
        <strain>SB210</strain>
    </source>
</reference>